<comment type="function">
    <text evidence="1">Part of the twin-arginine translocation (Tat) system that transports large folded proteins containing a characteristic twin-arginine motif in their signal peptide across membranes. TatA could form the protein-conducting channel of the Tat system.</text>
</comment>
<comment type="subunit">
    <text evidence="1">The Tat system comprises two distinct complexes: a TatABC complex, containing multiple copies of TatA, TatB and TatC subunits, and a separate TatA complex, containing only TatA subunits. Substrates initially bind to the TatABC complex, which probably triggers association of the separate TatA complex to form the active translocon.</text>
</comment>
<comment type="subcellular location">
    <subcellularLocation>
        <location evidence="1">Cell inner membrane</location>
        <topology evidence="1">Single-pass membrane protein</topology>
    </subcellularLocation>
</comment>
<comment type="similarity">
    <text evidence="1">Belongs to the TatA/E family.</text>
</comment>
<dbReference type="EMBL" id="CP001157">
    <property type="protein sequence ID" value="ACO80660.1"/>
    <property type="molecule type" value="Genomic_DNA"/>
</dbReference>
<dbReference type="RefSeq" id="WP_012703027.1">
    <property type="nucleotide sequence ID" value="NC_012560.1"/>
</dbReference>
<dbReference type="SMR" id="C1DHS7"/>
<dbReference type="STRING" id="322710.Avin_45460"/>
<dbReference type="EnsemblBacteria" id="ACO80660">
    <property type="protein sequence ID" value="ACO80660"/>
    <property type="gene ID" value="Avin_45460"/>
</dbReference>
<dbReference type="GeneID" id="88187430"/>
<dbReference type="KEGG" id="avn:Avin_45460"/>
<dbReference type="eggNOG" id="COG1826">
    <property type="taxonomic scope" value="Bacteria"/>
</dbReference>
<dbReference type="HOGENOM" id="CLU_086034_5_1_6"/>
<dbReference type="OrthoDB" id="7066617at2"/>
<dbReference type="Proteomes" id="UP000002424">
    <property type="component" value="Chromosome"/>
</dbReference>
<dbReference type="GO" id="GO:0033281">
    <property type="term" value="C:TAT protein transport complex"/>
    <property type="evidence" value="ECO:0007669"/>
    <property type="project" value="UniProtKB-UniRule"/>
</dbReference>
<dbReference type="GO" id="GO:0008320">
    <property type="term" value="F:protein transmembrane transporter activity"/>
    <property type="evidence" value="ECO:0007669"/>
    <property type="project" value="UniProtKB-UniRule"/>
</dbReference>
<dbReference type="GO" id="GO:0043953">
    <property type="term" value="P:protein transport by the Tat complex"/>
    <property type="evidence" value="ECO:0007669"/>
    <property type="project" value="UniProtKB-UniRule"/>
</dbReference>
<dbReference type="Gene3D" id="1.20.5.3310">
    <property type="match status" value="1"/>
</dbReference>
<dbReference type="HAMAP" id="MF_00236">
    <property type="entry name" value="TatA_E"/>
    <property type="match status" value="1"/>
</dbReference>
<dbReference type="InterPro" id="IPR003369">
    <property type="entry name" value="TatA/B/E"/>
</dbReference>
<dbReference type="InterPro" id="IPR006312">
    <property type="entry name" value="TatA/E"/>
</dbReference>
<dbReference type="NCBIfam" id="NF001681">
    <property type="entry name" value="PRK00442.1"/>
    <property type="match status" value="1"/>
</dbReference>
<dbReference type="NCBIfam" id="TIGR01411">
    <property type="entry name" value="tatAE"/>
    <property type="match status" value="1"/>
</dbReference>
<dbReference type="PANTHER" id="PTHR42982">
    <property type="entry name" value="SEC-INDEPENDENT PROTEIN TRANSLOCASE PROTEIN TATA"/>
    <property type="match status" value="1"/>
</dbReference>
<dbReference type="PANTHER" id="PTHR42982:SF1">
    <property type="entry name" value="SEC-INDEPENDENT PROTEIN TRANSLOCASE PROTEIN TATA"/>
    <property type="match status" value="1"/>
</dbReference>
<dbReference type="Pfam" id="PF02416">
    <property type="entry name" value="TatA_B_E"/>
    <property type="match status" value="1"/>
</dbReference>
<protein>
    <recommendedName>
        <fullName evidence="1">Sec-independent protein translocase protein TatA</fullName>
    </recommendedName>
</protein>
<reference key="1">
    <citation type="journal article" date="2009" name="J. Bacteriol.">
        <title>Genome sequence of Azotobacter vinelandii, an obligate aerobe specialized to support diverse anaerobic metabolic processes.</title>
        <authorList>
            <person name="Setubal J.C."/>
            <person name="Dos Santos P."/>
            <person name="Goldman B.S."/>
            <person name="Ertesvaag H."/>
            <person name="Espin G."/>
            <person name="Rubio L.M."/>
            <person name="Valla S."/>
            <person name="Almeida N.F."/>
            <person name="Balasubramanian D."/>
            <person name="Cromes L."/>
            <person name="Curatti L."/>
            <person name="Du Z."/>
            <person name="Godsy E."/>
            <person name="Goodner B."/>
            <person name="Hellner-Burris K."/>
            <person name="Hernandez J.A."/>
            <person name="Houmiel K."/>
            <person name="Imperial J."/>
            <person name="Kennedy C."/>
            <person name="Larson T.J."/>
            <person name="Latreille P."/>
            <person name="Ligon L.S."/>
            <person name="Lu J."/>
            <person name="Maerk M."/>
            <person name="Miller N.M."/>
            <person name="Norton S."/>
            <person name="O'Carroll I.P."/>
            <person name="Paulsen I."/>
            <person name="Raulfs E.C."/>
            <person name="Roemer R."/>
            <person name="Rosser J."/>
            <person name="Segura D."/>
            <person name="Slater S."/>
            <person name="Stricklin S.L."/>
            <person name="Studholme D.J."/>
            <person name="Sun J."/>
            <person name="Viana C.J."/>
            <person name="Wallin E."/>
            <person name="Wang B."/>
            <person name="Wheeler C."/>
            <person name="Zhu H."/>
            <person name="Dean D.R."/>
            <person name="Dixon R."/>
            <person name="Wood D."/>
        </authorList>
    </citation>
    <scope>NUCLEOTIDE SEQUENCE [LARGE SCALE GENOMIC DNA]</scope>
    <source>
        <strain>DJ / ATCC BAA-1303</strain>
    </source>
</reference>
<evidence type="ECO:0000255" key="1">
    <source>
        <dbReference type="HAMAP-Rule" id="MF_00236"/>
    </source>
</evidence>
<evidence type="ECO:0000256" key="2">
    <source>
        <dbReference type="SAM" id="MobiDB-lite"/>
    </source>
</evidence>
<sequence length="85" mass="9365">MGIFDWKHWLIILIVVVLVFGTKRLKTLGSDIGEAIKGFRKAVNTEEGENRPAEPQTGTSAGDTLNKTQTIEGQAQKVDTPVRKD</sequence>
<keyword id="KW-0997">Cell inner membrane</keyword>
<keyword id="KW-1003">Cell membrane</keyword>
<keyword id="KW-0472">Membrane</keyword>
<keyword id="KW-0653">Protein transport</keyword>
<keyword id="KW-0811">Translocation</keyword>
<keyword id="KW-0812">Transmembrane</keyword>
<keyword id="KW-1133">Transmembrane helix</keyword>
<keyword id="KW-0813">Transport</keyword>
<gene>
    <name evidence="1" type="primary">tatA</name>
    <name type="ordered locus">Avin_45460</name>
</gene>
<name>TATA_AZOVD</name>
<proteinExistence type="inferred from homology"/>
<organism>
    <name type="scientific">Azotobacter vinelandii (strain DJ / ATCC BAA-1303)</name>
    <dbReference type="NCBI Taxonomy" id="322710"/>
    <lineage>
        <taxon>Bacteria</taxon>
        <taxon>Pseudomonadati</taxon>
        <taxon>Pseudomonadota</taxon>
        <taxon>Gammaproteobacteria</taxon>
        <taxon>Pseudomonadales</taxon>
        <taxon>Pseudomonadaceae</taxon>
        <taxon>Azotobacter</taxon>
    </lineage>
</organism>
<feature type="chain" id="PRO_1000204433" description="Sec-independent protein translocase protein TatA">
    <location>
        <begin position="1"/>
        <end position="85"/>
    </location>
</feature>
<feature type="transmembrane region" description="Helical" evidence="1">
    <location>
        <begin position="1"/>
        <end position="21"/>
    </location>
</feature>
<feature type="region of interest" description="Disordered" evidence="2">
    <location>
        <begin position="43"/>
        <end position="85"/>
    </location>
</feature>
<feature type="compositionally biased region" description="Polar residues" evidence="2">
    <location>
        <begin position="56"/>
        <end position="73"/>
    </location>
</feature>
<accession>C1DHS7</accession>